<comment type="function">
    <text>Orphan nuclear receptor.</text>
</comment>
<comment type="subcellular location">
    <subcellularLocation>
        <location evidence="1">Nucleus</location>
    </subcellularLocation>
</comment>
<comment type="similarity">
    <text evidence="3">Belongs to the nuclear hormone receptor family.</text>
</comment>
<keyword id="KW-0238">DNA-binding</keyword>
<keyword id="KW-0479">Metal-binding</keyword>
<keyword id="KW-0539">Nucleus</keyword>
<keyword id="KW-0675">Receptor</keyword>
<keyword id="KW-1185">Reference proteome</keyword>
<keyword id="KW-0804">Transcription</keyword>
<keyword id="KW-0805">Transcription regulation</keyword>
<keyword id="KW-0862">Zinc</keyword>
<keyword id="KW-0863">Zinc-finger</keyword>
<reference key="1">
    <citation type="journal article" date="1998" name="Science">
        <title>Genome sequence of the nematode C. elegans: a platform for investigating biology.</title>
        <authorList>
            <consortium name="The C. elegans sequencing consortium"/>
        </authorList>
    </citation>
    <scope>NUCLEOTIDE SEQUENCE [LARGE SCALE GENOMIC DNA]</scope>
    <source>
        <strain>Bristol N2</strain>
    </source>
</reference>
<name>NHR42_CAEEL</name>
<sequence>MTRQTTSQTCLICGDSADSLHFGALSCRACAAFFRRKVAGRRNIFRRCDRQCKVDTGMRKLCASCRYDKCLKVGMRESAVLSRLAKKNQNYKKSIVGSPDAYEPSTSTSDSVLENLQSAYHKLEETRKRVFNISETHVSQCCNYKRMNDVFFEDIKLVMEHLLETFKKSDISQEQEKLLCVHFMVPFILFEGGYKSTNSDLFYLPSGDFIDENRIEEYYSNPDDQNDNSAKSAAEVFRPYWKLNKQTLKTHLDDVQLDLPEFLFITALIYFDDGLLDQNEECIEVCKQMKAKIIEELTDYEKNVRINEDHSYRVGQIIMVLHGIQRTMNMIHETKEISLVYNVYDMHSSIFGNMAE</sequence>
<evidence type="ECO:0000255" key="1">
    <source>
        <dbReference type="PROSITE-ProRule" id="PRU00407"/>
    </source>
</evidence>
<evidence type="ECO:0000255" key="2">
    <source>
        <dbReference type="PROSITE-ProRule" id="PRU01189"/>
    </source>
</evidence>
<evidence type="ECO:0000305" key="3"/>
<dbReference type="EMBL" id="FO080765">
    <property type="protein sequence ID" value="CCD66530.1"/>
    <property type="molecule type" value="Genomic_DNA"/>
</dbReference>
<dbReference type="PIR" id="T34133">
    <property type="entry name" value="T34133"/>
</dbReference>
<dbReference type="RefSeq" id="NP_504771.1">
    <property type="nucleotide sequence ID" value="NM_072370.4"/>
</dbReference>
<dbReference type="SMR" id="O76828"/>
<dbReference type="BioGRID" id="44129">
    <property type="interactions" value="3"/>
</dbReference>
<dbReference type="DIP" id="DIP-24601N"/>
<dbReference type="FunCoup" id="O76828">
    <property type="interactions" value="205"/>
</dbReference>
<dbReference type="IntAct" id="O76828">
    <property type="interactions" value="2"/>
</dbReference>
<dbReference type="STRING" id="6239.C33G8.6.1"/>
<dbReference type="PaxDb" id="6239-C33G8.6"/>
<dbReference type="EnsemblMetazoa" id="C33G8.6.1">
    <property type="protein sequence ID" value="C33G8.6.1"/>
    <property type="gene ID" value="WBGene00003632"/>
</dbReference>
<dbReference type="GeneID" id="179084"/>
<dbReference type="KEGG" id="cel:CELE_C33G8.6"/>
<dbReference type="UCSC" id="C33G8.6">
    <property type="organism name" value="c. elegans"/>
</dbReference>
<dbReference type="AGR" id="WB:WBGene00003632"/>
<dbReference type="CTD" id="179084"/>
<dbReference type="WormBase" id="C33G8.6">
    <property type="protein sequence ID" value="CE17496"/>
    <property type="gene ID" value="WBGene00003632"/>
    <property type="gene designation" value="nhr-42"/>
</dbReference>
<dbReference type="eggNOG" id="KOG3575">
    <property type="taxonomic scope" value="Eukaryota"/>
</dbReference>
<dbReference type="GeneTree" id="ENSGT00970000196002"/>
<dbReference type="HOGENOM" id="CLU_007368_1_1_1"/>
<dbReference type="InParanoid" id="O76828"/>
<dbReference type="OMA" id="VFRPYWK"/>
<dbReference type="OrthoDB" id="10018779at2759"/>
<dbReference type="PhylomeDB" id="O76828"/>
<dbReference type="PRO" id="PR:O76828"/>
<dbReference type="Proteomes" id="UP000001940">
    <property type="component" value="Chromosome V"/>
</dbReference>
<dbReference type="Bgee" id="WBGene00003632">
    <property type="expression patterns" value="Expressed in pharyngeal muscle cell (C elegans) and 3 other cell types or tissues"/>
</dbReference>
<dbReference type="GO" id="GO:0005634">
    <property type="term" value="C:nucleus"/>
    <property type="evidence" value="ECO:0000318"/>
    <property type="project" value="GO_Central"/>
</dbReference>
<dbReference type="GO" id="GO:0003700">
    <property type="term" value="F:DNA-binding transcription factor activity"/>
    <property type="evidence" value="ECO:0000318"/>
    <property type="project" value="GO_Central"/>
</dbReference>
<dbReference type="GO" id="GO:0043565">
    <property type="term" value="F:sequence-specific DNA binding"/>
    <property type="evidence" value="ECO:0007669"/>
    <property type="project" value="InterPro"/>
</dbReference>
<dbReference type="GO" id="GO:0008270">
    <property type="term" value="F:zinc ion binding"/>
    <property type="evidence" value="ECO:0007669"/>
    <property type="project" value="UniProtKB-KW"/>
</dbReference>
<dbReference type="GO" id="GO:0006357">
    <property type="term" value="P:regulation of transcription by RNA polymerase II"/>
    <property type="evidence" value="ECO:0000318"/>
    <property type="project" value="GO_Central"/>
</dbReference>
<dbReference type="Gene3D" id="3.30.50.10">
    <property type="entry name" value="Erythroid Transcription Factor GATA-1, subunit A"/>
    <property type="match status" value="1"/>
</dbReference>
<dbReference type="Gene3D" id="1.10.565.10">
    <property type="entry name" value="Retinoid X Receptor"/>
    <property type="match status" value="1"/>
</dbReference>
<dbReference type="InterPro" id="IPR035500">
    <property type="entry name" value="NHR-like_dom_sf"/>
</dbReference>
<dbReference type="InterPro" id="IPR000536">
    <property type="entry name" value="Nucl_hrmn_rcpt_lig-bd"/>
</dbReference>
<dbReference type="InterPro" id="IPR001628">
    <property type="entry name" value="Znf_hrmn_rcpt"/>
</dbReference>
<dbReference type="InterPro" id="IPR013088">
    <property type="entry name" value="Znf_NHR/GATA"/>
</dbReference>
<dbReference type="PANTHER" id="PTHR46011:SF5">
    <property type="entry name" value="NUCLEAR HORMONE RECEPTOR FAMILY MEMBER NHR-42"/>
    <property type="match status" value="1"/>
</dbReference>
<dbReference type="PANTHER" id="PTHR46011">
    <property type="entry name" value="NUCLEAR HORMONE RECEPTOR FAMILY MEMBER NHR-86-RELATED"/>
    <property type="match status" value="1"/>
</dbReference>
<dbReference type="Pfam" id="PF00104">
    <property type="entry name" value="Hormone_recep"/>
    <property type="match status" value="1"/>
</dbReference>
<dbReference type="Pfam" id="PF00105">
    <property type="entry name" value="zf-C4"/>
    <property type="match status" value="1"/>
</dbReference>
<dbReference type="PRINTS" id="PR00047">
    <property type="entry name" value="STROIDFINGER"/>
</dbReference>
<dbReference type="SMART" id="SM00430">
    <property type="entry name" value="HOLI"/>
    <property type="match status" value="1"/>
</dbReference>
<dbReference type="SMART" id="SM00399">
    <property type="entry name" value="ZnF_C4"/>
    <property type="match status" value="1"/>
</dbReference>
<dbReference type="SUPFAM" id="SSF57716">
    <property type="entry name" value="Glucocorticoid receptor-like (DNA-binding domain)"/>
    <property type="match status" value="1"/>
</dbReference>
<dbReference type="SUPFAM" id="SSF48508">
    <property type="entry name" value="Nuclear receptor ligand-binding domain"/>
    <property type="match status" value="1"/>
</dbReference>
<dbReference type="PROSITE" id="PS51843">
    <property type="entry name" value="NR_LBD"/>
    <property type="match status" value="1"/>
</dbReference>
<dbReference type="PROSITE" id="PS00031">
    <property type="entry name" value="NUCLEAR_REC_DBD_1"/>
    <property type="match status" value="1"/>
</dbReference>
<dbReference type="PROSITE" id="PS51030">
    <property type="entry name" value="NUCLEAR_REC_DBD_2"/>
    <property type="match status" value="1"/>
</dbReference>
<protein>
    <recommendedName>
        <fullName>Nuclear hormone receptor family member nhr-42</fullName>
    </recommendedName>
</protein>
<gene>
    <name type="primary">nhr-42</name>
    <name type="ORF">C33G8.6</name>
</gene>
<organism>
    <name type="scientific">Caenorhabditis elegans</name>
    <dbReference type="NCBI Taxonomy" id="6239"/>
    <lineage>
        <taxon>Eukaryota</taxon>
        <taxon>Metazoa</taxon>
        <taxon>Ecdysozoa</taxon>
        <taxon>Nematoda</taxon>
        <taxon>Chromadorea</taxon>
        <taxon>Rhabditida</taxon>
        <taxon>Rhabditina</taxon>
        <taxon>Rhabditomorpha</taxon>
        <taxon>Rhabditoidea</taxon>
        <taxon>Rhabditidae</taxon>
        <taxon>Peloderinae</taxon>
        <taxon>Caenorhabditis</taxon>
    </lineage>
</organism>
<proteinExistence type="inferred from homology"/>
<feature type="chain" id="PRO_0000053781" description="Nuclear hormone receptor family member nhr-42">
    <location>
        <begin position="1"/>
        <end position="356"/>
    </location>
</feature>
<feature type="domain" description="NR LBD" evidence="2">
    <location>
        <begin position="108"/>
        <end position="356"/>
    </location>
</feature>
<feature type="DNA-binding region" description="Nuclear receptor" evidence="1">
    <location>
        <begin position="7"/>
        <end position="82"/>
    </location>
</feature>
<feature type="zinc finger region" description="NR C4-type" evidence="1">
    <location>
        <begin position="10"/>
        <end position="30"/>
    </location>
</feature>
<feature type="zinc finger region" description="NR C4-type; atypical" evidence="1">
    <location>
        <begin position="48"/>
        <end position="70"/>
    </location>
</feature>
<accession>O76828</accession>